<accession>Q9Y485</accession>
<gene>
    <name type="primary">DMXL1</name>
    <name type="synonym">XL1</name>
</gene>
<sequence>MNLHQVLTGAVNPGDHCFSVGSIGDQRFTAYASGCDIVILGSDFERLQIIPGAKHGNIQVGCVDCSMQQGKIAASYGNVISIFEPVNLPKQKKNLELYSQWQKSGQFFLESIAHNITWDPTGSRLLTGSSYLQLWSNTNLEKPTEDENLNKTDLNFGDWKCIWHCKTASQVHLMKFSPDGEFFATAGKDDCLLKVWYNVENWRTAVTSPDGSSEKQSQGEIDFSFVYLAHPRAVNGFSWRKTSKYMPRASVCNVLLTCCKDNVCRLWVETFLPNDCLLYGGDCSHWTESINLTNNFKRNASSKERVQNALEVNLRHFRRGRRRSLALVAHTGYLPHQQDPHHVHRNTPLHANALCHFHIAASINPATDIPLLPSITSLSLNENEEKTGPFVVHWLNNKELHFTLSMEVFLQQLRKSFEQPSSEASVEDSNQADVKSDEETDDGVDDLKINPEKKELGCDKMVPNSSFTSLSSAAIDHQIEVLLSEWSKNADMLFSIHPMDGSLLVWHVDWLDEYQPGMFRQVQVSFVSRIPVAFPTGDANSLCKSIMMYACTKNVDLAIQQGKQKPSGLTRSTSMLISSGHNKSSNSLKLSIFTPNVMMISKHADGSLNQWLVSFAEESAFSTVLSISHKSRYCGHRFHLNDLACHSVLPLLLTTSHHNALRTPDVDNPEQPFDALNIEECSLTQQNKSTVDVAFQDPSAVYSELILWRVDPVGPLSFSGGVSELARINSLHVSAFSNVAWLPTLIPSYCLGAYCNSPSACFVASDGQYLRLYEAVIDAKKLLSELSNPEISKYVGEVFNIVSQQSTARPGCIIALDPITKLHGRKTQLLHVFEEDFILNNLEKKSLGKDSILSNAGSSPNGFSEKFYLIVIECTQDNRSLLHMWNLHLKSIPVSLDEKVDTKLSEAVWQPEEHYSSSPEKILSPFSQKYQACRANLQSTSRLTLFSEMVYSQELHLPEGVEIISIKPSAGHLSSSSIYPACSAPYLLATSCSDEKVRFWRCRVTDGESATSKNGKIDLAYIWEEWPLLIEDGLQSNSSITVPGRPVEVSCAHTNRLAVAYKQPASNSRSSQDFVMHVSIFECESTGGSCWVLEQTIHLDELSTVLDSGISVDSNLVAYNKQDMYLSSKENITSNTKHLVHLDWMSREDGSHILTVGIGSKLFMYGPLAGKVQDQTGKETLAFPLWESTKVVPLSKFVLLRSVDLVSSVDGSPPFPVSLSWVRDGILVVGMDCEMHVYCQWQPSSKQEPVITDSYSGSTPSITSLIKQSNSSSGLHPPKKTLTRSMTSLAQKICGKKTAFDPSVDMEDSGLFEAAHVLSPTLPQYHPLQLLELMDLGKVRRAKAILSHLVKCIAGEVVALNEAESNHERRLRSLTISASGSTTRDPQAFNKAENTDYTEIDSVPPLPLYALLAADDDSCYSSLEKSSNESTLSKSNQLSKESYDELFQTQLLMTDTHMLETDEENTKPRVIDLSQYSPTYFGPEHAQVLSGHLLHSSLPGLSRMEQMSLMALADTIATTSTDIGESRDRSQGGETLDECGLKFLLAVRLHTFLTTSLPAYRAQLLHQGLSTSHFAWAFHSVAEEELLNMLPAMQKDDPTWSELRAMGVGWWVRNTRILRKCIEKVAKAAFYRKNDPLDAAIFYLAMKKKAVIWGLYRAEKNTRMTQFFGHNFEDERWRKAALKNAFSLLGKQRFEHSAAFFLLAGCLRDAIEVCLEKLNDIQLALVIARLYESEFDTSAAYKSILRKKVLGIDSPVSELCSLNINMHHDPFLRSMAYWILEDYSGALETLIKQPIRENDDQVLSASNPTVFNFYNYLRTHPLLLRRHFGSSDTFSTHMSLTGKSGLAGTINLSERRLFFTTASAHLKAGCPMLALEVLSKMPKVIKKTRPFYRASSFLDTSKDCSPSSPLKLDAREDKSSAVDWSQSLINGFGSSSEGSSEKQSNSTLSFDWSQPSVVFQDDSLELKWDSDNDEENEDVPISMKELKPLQRKTDKKLDDISSNYTESFSTLDENDLLNPSEDIIAVQLKFRACLKILTVELRTLSTGYEIDGGKLRYQLYHWLEKEVIALQRTCDFCSDAEELQSAFGRNEDEFGLNEDAEDLPHQTKVKQLRENFQEKRQWLLKYQSLLRMFLSYCILHGSHGGGLASVRMELILLLQESQQETSEPLFSSPLSEQTSVPLLFACTANAKTVVANPLLHLSNLTHDILHAIINFDSPPHPDIQSNKVYVMHTLAASLSACIYQCLCGSHNYSSFQTNQFTGMVYQTVLLPHRPSLKTGSLDEALTPNTSPAQWPGITCLIRLLNSSGEEAQSGLTVLLCEILTAVYLSLFIHGLATHSSNELFRIVAHPLNEKMWSAVFGGGAHVPSKEQTHSKTLPVSSLVEEGEKQNKRFRPSKMSCRESAPLTPSSAPVSQESLAVKEKFIPPELSIWDYFIAKPFLPSSQSRAEYDSEESLGSDDDDNDDDDDVLASDFHLQEHSNSNSYSWSLMRLAMVQLVLNNLKTFYPFAGHDLAELPVSSPLCHAVLKTLQCWEQVLLRRLEIHGGPPQNYIASHTAEESLSAGPAILRHKALLEPTNTPFKSKHHLALSVKRLWQYLVKQEEIQETFIKNIFTKKRCLNEIEADLGYPGGKARIIHKESDIITAFAVNKANRNCIAIASSHDVQELDVSGILATQVYTWVDDDIEVETKGSEDFLVIHARDDLTAVQGTTPYTHSNPGTPINMPWLGSTQTGRGASVMIKKAINNVRRMTSHPTLPYYLTGAQDGSVRMFEWGHSQQITCFRSGGNSRVTRMRFNYQGNKFGIVDADGYLSLYQTNWKCCPVTGSMPKPYLTWQCHNKTANDFVFVSSSSLIATAGLSTDNRNVCLWDTLVAPANSLVHAFTCHDSGATVLAYAPKHQLLISGGRKGFTYVFDLCQRQQRQLFQSHDSPVKAVAVDPTEEYFVTGSAEGNIKIWSLSTFGLLHTFVSEHARQSIFRNIGTGVMQIETGPANHIFSCGADGTMKMRILPDQFSPLNEVLKNDVKFML</sequence>
<name>DMXL1_HUMAN</name>
<comment type="tissue specificity">
    <text evidence="3">Expressed in bone, breast, eye, foreskin, heart, parathyroid, small intestine, testis, tonsils, placenta and uterus.</text>
</comment>
<comment type="developmental stage">
    <text evidence="3">Expressed in whole embryo.</text>
</comment>
<evidence type="ECO:0000250" key="1">
    <source>
        <dbReference type="UniProtKB" id="Q6PNC0"/>
    </source>
</evidence>
<evidence type="ECO:0000256" key="2">
    <source>
        <dbReference type="SAM" id="MobiDB-lite"/>
    </source>
</evidence>
<evidence type="ECO:0000269" key="3">
    <source>
    </source>
</evidence>
<evidence type="ECO:0000305" key="4"/>
<evidence type="ECO:0007744" key="5">
    <source>
    </source>
</evidence>
<evidence type="ECO:0007744" key="6">
    <source>
    </source>
</evidence>
<evidence type="ECO:0007744" key="7">
    <source>
    </source>
</evidence>
<evidence type="ECO:0007744" key="8">
    <source>
    </source>
</evidence>
<evidence type="ECO:0007744" key="9">
    <source>
    </source>
</evidence>
<evidence type="ECO:0007744" key="10">
    <source>
    </source>
</evidence>
<feature type="chain" id="PRO_0000223322" description="DmX-like protein 1">
    <location>
        <begin position="1"/>
        <end position="3027"/>
    </location>
</feature>
<feature type="repeat" description="WD 1">
    <location>
        <begin position="108"/>
        <end position="145"/>
    </location>
</feature>
<feature type="repeat" description="WD 2">
    <location>
        <begin position="166"/>
        <end position="206"/>
    </location>
</feature>
<feature type="repeat" description="WD 3">
    <location>
        <begin position="229"/>
        <end position="277"/>
    </location>
</feature>
<feature type="repeat" description="WD 4">
    <location>
        <begin position="476"/>
        <end position="516"/>
    </location>
</feature>
<feature type="repeat" description="WD 5">
    <location>
        <begin position="580"/>
        <end position="621"/>
    </location>
</feature>
<feature type="repeat" description="WD 6">
    <location>
        <begin position="628"/>
        <end position="665"/>
    </location>
</feature>
<feature type="repeat" description="WD 7">
    <location>
        <begin position="848"/>
        <end position="895"/>
    </location>
</feature>
<feature type="repeat" description="WD 8">
    <location>
        <begin position="968"/>
        <end position="1010"/>
    </location>
</feature>
<feature type="repeat" description="WD 9">
    <location>
        <begin position="1134"/>
        <end position="1175"/>
    </location>
</feature>
<feature type="repeat" description="WD 10">
    <location>
        <begin position="1211"/>
        <end position="1251"/>
    </location>
</feature>
<feature type="repeat" description="WD 11">
    <location>
        <begin position="2742"/>
        <end position="2783"/>
    </location>
</feature>
<feature type="repeat" description="WD 12">
    <location>
        <begin position="2785"/>
        <end position="2824"/>
    </location>
</feature>
<feature type="repeat" description="WD 12">
    <location>
        <begin position="2836"/>
        <end position="2878"/>
    </location>
</feature>
<feature type="repeat" description="WD 14">
    <location>
        <begin position="2884"/>
        <end position="2923"/>
    </location>
</feature>
<feature type="repeat" description="WD 15">
    <location>
        <begin position="2926"/>
        <end position="2965"/>
    </location>
</feature>
<feature type="repeat" description="WD 16">
    <location>
        <begin position="2978"/>
        <end position="3016"/>
    </location>
</feature>
<feature type="region of interest" description="Disordered" evidence="2">
    <location>
        <begin position="420"/>
        <end position="450"/>
    </location>
</feature>
<feature type="region of interest" description="Disordered" evidence="2">
    <location>
        <begin position="563"/>
        <end position="584"/>
    </location>
</feature>
<feature type="region of interest" description="Disordered" evidence="2">
    <location>
        <begin position="2367"/>
        <end position="2412"/>
    </location>
</feature>
<feature type="region of interest" description="Disordered" evidence="2">
    <location>
        <begin position="2446"/>
        <end position="2468"/>
    </location>
</feature>
<feature type="compositionally biased region" description="Polar residues" evidence="2">
    <location>
        <begin position="420"/>
        <end position="433"/>
    </location>
</feature>
<feature type="compositionally biased region" description="Acidic residues" evidence="2">
    <location>
        <begin position="2451"/>
        <end position="2468"/>
    </location>
</feature>
<feature type="modified residue" description="Phosphoserine" evidence="8">
    <location>
        <position position="324"/>
    </location>
</feature>
<feature type="modified residue" description="Phosphoserine" evidence="1">
    <location>
        <position position="422"/>
    </location>
</feature>
<feature type="modified residue" description="Phosphoserine" evidence="1">
    <location>
        <position position="425"/>
    </location>
</feature>
<feature type="modified residue" description="Phosphoserine" evidence="7 8 9">
    <location>
        <position position="436"/>
    </location>
</feature>
<feature type="modified residue" description="Phosphoserine" evidence="1">
    <location>
        <position position="574"/>
    </location>
</feature>
<feature type="modified residue" description="Phosphoserine" evidence="9">
    <location>
        <position position="918"/>
    </location>
</feature>
<feature type="modified residue" description="Phosphoserine" evidence="5 9">
    <location>
        <position position="924"/>
    </location>
</feature>
<feature type="modified residue" description="Phosphoserine" evidence="9">
    <location>
        <position position="1830"/>
    </location>
</feature>
<feature type="modified residue" description="Phosphoserine" evidence="9">
    <location>
        <position position="1896"/>
    </location>
</feature>
<feature type="modified residue" description="Phosphoserine" evidence="9">
    <location>
        <position position="1908"/>
    </location>
</feature>
<feature type="modified residue" description="Phosphoserine" evidence="6 7 8 10">
    <location>
        <position position="1970"/>
    </location>
</feature>
<feature type="sequence variant" id="VAR_057589" description="In dbSNP:rs7700801.">
    <original>I</original>
    <variation>M</variation>
    <location>
        <position position="221"/>
    </location>
</feature>
<feature type="sequence variant" id="VAR_057590" description="In dbSNP:rs4895362.">
    <original>S</original>
    <variation>N</variation>
    <location>
        <position position="851"/>
    </location>
</feature>
<feature type="sequence variant" id="VAR_057591" description="In dbSNP:rs9790916.">
    <original>V</original>
    <variation>M</variation>
    <location>
        <position position="2067"/>
    </location>
</feature>
<feature type="sequence variant" id="VAR_057592" description="In dbSNP:rs9791092.">
    <original>T</original>
    <variation>S</variation>
    <location>
        <position position="2107"/>
    </location>
</feature>
<feature type="sequence conflict" description="In Ref. 1; CAA06718." evidence="4" ref="1">
    <original>P</original>
    <variation>L</variation>
    <location>
        <position position="2173"/>
    </location>
</feature>
<feature type="sequence conflict" description="In Ref. 1; CAA06718." evidence="4" ref="1">
    <original>E</original>
    <variation>Z</variation>
    <location>
        <position position="2453"/>
    </location>
</feature>
<feature type="sequence conflict" description="In Ref. 1; CAA06718." evidence="4" ref="1">
    <original>N</original>
    <variation>D</variation>
    <location>
        <position position="2876"/>
    </location>
</feature>
<reference key="1">
    <citation type="journal article" date="2000" name="Genomics">
        <title>Mapping and structure of DMXL1, a human homologue of the DmX gene from Drosophila melanogaster coding for a WD repeat protein.</title>
        <authorList>
            <person name="Kraemer C."/>
            <person name="Enklaar T."/>
            <person name="Zabel B."/>
            <person name="Schmidt E.R."/>
        </authorList>
    </citation>
    <scope>NUCLEOTIDE SEQUENCE [MRNA]</scope>
    <scope>TISSUE SPECIFICITY</scope>
    <scope>DEVELOPMENTAL STAGE</scope>
    <source>
        <tissue>Placenta</tissue>
    </source>
</reference>
<reference key="2">
    <citation type="journal article" date="2004" name="Nature">
        <title>The DNA sequence and comparative analysis of human chromosome 5.</title>
        <authorList>
            <person name="Schmutz J."/>
            <person name="Martin J."/>
            <person name="Terry A."/>
            <person name="Couronne O."/>
            <person name="Grimwood J."/>
            <person name="Lowry S."/>
            <person name="Gordon L.A."/>
            <person name="Scott D."/>
            <person name="Xie G."/>
            <person name="Huang W."/>
            <person name="Hellsten U."/>
            <person name="Tran-Gyamfi M."/>
            <person name="She X."/>
            <person name="Prabhakar S."/>
            <person name="Aerts A."/>
            <person name="Altherr M."/>
            <person name="Bajorek E."/>
            <person name="Black S."/>
            <person name="Branscomb E."/>
            <person name="Caoile C."/>
            <person name="Challacombe J.F."/>
            <person name="Chan Y.M."/>
            <person name="Denys M."/>
            <person name="Detter J.C."/>
            <person name="Escobar J."/>
            <person name="Flowers D."/>
            <person name="Fotopulos D."/>
            <person name="Glavina T."/>
            <person name="Gomez M."/>
            <person name="Gonzales E."/>
            <person name="Goodstein D."/>
            <person name="Grigoriev I."/>
            <person name="Groza M."/>
            <person name="Hammon N."/>
            <person name="Hawkins T."/>
            <person name="Haydu L."/>
            <person name="Israni S."/>
            <person name="Jett J."/>
            <person name="Kadner K."/>
            <person name="Kimball H."/>
            <person name="Kobayashi A."/>
            <person name="Lopez F."/>
            <person name="Lou Y."/>
            <person name="Martinez D."/>
            <person name="Medina C."/>
            <person name="Morgan J."/>
            <person name="Nandkeshwar R."/>
            <person name="Noonan J.P."/>
            <person name="Pitluck S."/>
            <person name="Pollard M."/>
            <person name="Predki P."/>
            <person name="Priest J."/>
            <person name="Ramirez L."/>
            <person name="Retterer J."/>
            <person name="Rodriguez A."/>
            <person name="Rogers S."/>
            <person name="Salamov A."/>
            <person name="Salazar A."/>
            <person name="Thayer N."/>
            <person name="Tice H."/>
            <person name="Tsai M."/>
            <person name="Ustaszewska A."/>
            <person name="Vo N."/>
            <person name="Wheeler J."/>
            <person name="Wu K."/>
            <person name="Yang J."/>
            <person name="Dickson M."/>
            <person name="Cheng J.-F."/>
            <person name="Eichler E.E."/>
            <person name="Olsen A."/>
            <person name="Pennacchio L.A."/>
            <person name="Rokhsar D.S."/>
            <person name="Richardson P."/>
            <person name="Lucas S.M."/>
            <person name="Myers R.M."/>
            <person name="Rubin E.M."/>
        </authorList>
    </citation>
    <scope>NUCLEOTIDE SEQUENCE [LARGE SCALE GENOMIC DNA]</scope>
</reference>
<reference key="3">
    <citation type="journal article" date="2008" name="Proc. Natl. Acad. Sci. U.S.A.">
        <title>A quantitative atlas of mitotic phosphorylation.</title>
        <authorList>
            <person name="Dephoure N."/>
            <person name="Zhou C."/>
            <person name="Villen J."/>
            <person name="Beausoleil S.A."/>
            <person name="Bakalarski C.E."/>
            <person name="Elledge S.J."/>
            <person name="Gygi S.P."/>
        </authorList>
    </citation>
    <scope>PHOSPHORYLATION [LARGE SCALE ANALYSIS] AT SER-924</scope>
    <scope>IDENTIFICATION BY MASS SPECTROMETRY [LARGE SCALE ANALYSIS]</scope>
    <source>
        <tissue>Cervix carcinoma</tissue>
    </source>
</reference>
<reference key="4">
    <citation type="journal article" date="2009" name="Anal. Chem.">
        <title>Lys-N and trypsin cover complementary parts of the phosphoproteome in a refined SCX-based approach.</title>
        <authorList>
            <person name="Gauci S."/>
            <person name="Helbig A.O."/>
            <person name="Slijper M."/>
            <person name="Krijgsveld J."/>
            <person name="Heck A.J."/>
            <person name="Mohammed S."/>
        </authorList>
    </citation>
    <scope>IDENTIFICATION BY MASS SPECTROMETRY [LARGE SCALE ANALYSIS]</scope>
</reference>
<reference key="5">
    <citation type="journal article" date="2009" name="Sci. Signal.">
        <title>Quantitative phosphoproteomic analysis of T cell receptor signaling reveals system-wide modulation of protein-protein interactions.</title>
        <authorList>
            <person name="Mayya V."/>
            <person name="Lundgren D.H."/>
            <person name="Hwang S.-I."/>
            <person name="Rezaul K."/>
            <person name="Wu L."/>
            <person name="Eng J.K."/>
            <person name="Rodionov V."/>
            <person name="Han D.K."/>
        </authorList>
    </citation>
    <scope>PHOSPHORYLATION [LARGE SCALE ANALYSIS] AT SER-1970</scope>
    <scope>IDENTIFICATION BY MASS SPECTROMETRY [LARGE SCALE ANALYSIS]</scope>
    <source>
        <tissue>Leukemic T-cell</tissue>
    </source>
</reference>
<reference key="6">
    <citation type="journal article" date="2010" name="Sci. Signal.">
        <title>Quantitative phosphoproteomics reveals widespread full phosphorylation site occupancy during mitosis.</title>
        <authorList>
            <person name="Olsen J.V."/>
            <person name="Vermeulen M."/>
            <person name="Santamaria A."/>
            <person name="Kumar C."/>
            <person name="Miller M.L."/>
            <person name="Jensen L.J."/>
            <person name="Gnad F."/>
            <person name="Cox J."/>
            <person name="Jensen T.S."/>
            <person name="Nigg E.A."/>
            <person name="Brunak S."/>
            <person name="Mann M."/>
        </authorList>
    </citation>
    <scope>PHOSPHORYLATION [LARGE SCALE ANALYSIS] AT SER-436 AND SER-1970</scope>
    <scope>IDENTIFICATION BY MASS SPECTROMETRY [LARGE SCALE ANALYSIS]</scope>
    <source>
        <tissue>Cervix carcinoma</tissue>
    </source>
</reference>
<reference key="7">
    <citation type="journal article" date="2011" name="BMC Syst. Biol.">
        <title>Initial characterization of the human central proteome.</title>
        <authorList>
            <person name="Burkard T.R."/>
            <person name="Planyavsky M."/>
            <person name="Kaupe I."/>
            <person name="Breitwieser F.P."/>
            <person name="Buerckstuemmer T."/>
            <person name="Bennett K.L."/>
            <person name="Superti-Furga G."/>
            <person name="Colinge J."/>
        </authorList>
    </citation>
    <scope>IDENTIFICATION BY MASS SPECTROMETRY [LARGE SCALE ANALYSIS]</scope>
</reference>
<reference key="8">
    <citation type="journal article" date="2011" name="Sci. Signal.">
        <title>System-wide temporal characterization of the proteome and phosphoproteome of human embryonic stem cell differentiation.</title>
        <authorList>
            <person name="Rigbolt K.T."/>
            <person name="Prokhorova T.A."/>
            <person name="Akimov V."/>
            <person name="Henningsen J."/>
            <person name="Johansen P.T."/>
            <person name="Kratchmarova I."/>
            <person name="Kassem M."/>
            <person name="Mann M."/>
            <person name="Olsen J.V."/>
            <person name="Blagoev B."/>
        </authorList>
    </citation>
    <scope>PHOSPHORYLATION [LARGE SCALE ANALYSIS] AT SER-324; SER-436 AND SER-1970</scope>
    <scope>IDENTIFICATION BY MASS SPECTROMETRY [LARGE SCALE ANALYSIS]</scope>
</reference>
<reference key="9">
    <citation type="journal article" date="2013" name="J. Proteome Res.">
        <title>Toward a comprehensive characterization of a human cancer cell phosphoproteome.</title>
        <authorList>
            <person name="Zhou H."/>
            <person name="Di Palma S."/>
            <person name="Preisinger C."/>
            <person name="Peng M."/>
            <person name="Polat A.N."/>
            <person name="Heck A.J."/>
            <person name="Mohammed S."/>
        </authorList>
    </citation>
    <scope>PHOSPHORYLATION [LARGE SCALE ANALYSIS] AT SER-436; SER-918; SER-924; SER-1830; SER-1896 AND SER-1908</scope>
    <scope>IDENTIFICATION BY MASS SPECTROMETRY [LARGE SCALE ANALYSIS]</scope>
    <source>
        <tissue>Cervix carcinoma</tissue>
        <tissue>Erythroleukemia</tissue>
    </source>
</reference>
<reference key="10">
    <citation type="journal article" date="2014" name="J. Proteomics">
        <title>An enzyme assisted RP-RPLC approach for in-depth analysis of human liver phosphoproteome.</title>
        <authorList>
            <person name="Bian Y."/>
            <person name="Song C."/>
            <person name="Cheng K."/>
            <person name="Dong M."/>
            <person name="Wang F."/>
            <person name="Huang J."/>
            <person name="Sun D."/>
            <person name="Wang L."/>
            <person name="Ye M."/>
            <person name="Zou H."/>
        </authorList>
    </citation>
    <scope>PHOSPHORYLATION [LARGE SCALE ANALYSIS] AT SER-1970</scope>
    <scope>IDENTIFICATION BY MASS SPECTROMETRY [LARGE SCALE ANALYSIS]</scope>
    <source>
        <tissue>Liver</tissue>
    </source>
</reference>
<keyword id="KW-0597">Phosphoprotein</keyword>
<keyword id="KW-1267">Proteomics identification</keyword>
<keyword id="KW-1185">Reference proteome</keyword>
<keyword id="KW-0677">Repeat</keyword>
<keyword id="KW-0853">WD repeat</keyword>
<proteinExistence type="evidence at protein level"/>
<protein>
    <recommendedName>
        <fullName>DmX-like protein 1</fullName>
        <shortName>X-like 1 protein</shortName>
    </recommendedName>
</protein>
<organism>
    <name type="scientific">Homo sapiens</name>
    <name type="common">Human</name>
    <dbReference type="NCBI Taxonomy" id="9606"/>
    <lineage>
        <taxon>Eukaryota</taxon>
        <taxon>Metazoa</taxon>
        <taxon>Chordata</taxon>
        <taxon>Craniata</taxon>
        <taxon>Vertebrata</taxon>
        <taxon>Euteleostomi</taxon>
        <taxon>Mammalia</taxon>
        <taxon>Eutheria</taxon>
        <taxon>Euarchontoglires</taxon>
        <taxon>Primates</taxon>
        <taxon>Haplorrhini</taxon>
        <taxon>Catarrhini</taxon>
        <taxon>Hominidae</taxon>
        <taxon>Homo</taxon>
    </lineage>
</organism>
<dbReference type="EMBL" id="AJ005821">
    <property type="protein sequence ID" value="CAA06718.2"/>
    <property type="molecule type" value="mRNA"/>
</dbReference>
<dbReference type="EMBL" id="AC027320">
    <property type="status" value="NOT_ANNOTATED_CDS"/>
    <property type="molecule type" value="Genomic_DNA"/>
</dbReference>
<dbReference type="EMBL" id="AC118465">
    <property type="status" value="NOT_ANNOTATED_CDS"/>
    <property type="molecule type" value="Genomic_DNA"/>
</dbReference>
<dbReference type="CCDS" id="CCDS4125.1"/>
<dbReference type="RefSeq" id="NP_001277250.1">
    <property type="nucleotide sequence ID" value="NM_001290321.2"/>
</dbReference>
<dbReference type="RefSeq" id="NP_001277251.1">
    <property type="nucleotide sequence ID" value="NM_001290322.2"/>
</dbReference>
<dbReference type="RefSeq" id="NP_001336169.1">
    <property type="nucleotide sequence ID" value="NM_001349240.2"/>
</dbReference>
<dbReference type="RefSeq" id="NP_001374862.1">
    <property type="nucleotide sequence ID" value="NM_001387933.1"/>
</dbReference>
<dbReference type="RefSeq" id="NP_005500.4">
    <property type="nucleotide sequence ID" value="NM_005509.5"/>
</dbReference>
<dbReference type="RefSeq" id="XP_016864631.1">
    <property type="nucleotide sequence ID" value="XM_017009142.1"/>
</dbReference>
<dbReference type="RefSeq" id="XP_047272791.1">
    <property type="nucleotide sequence ID" value="XM_047416835.1"/>
</dbReference>
<dbReference type="RefSeq" id="XP_054207841.1">
    <property type="nucleotide sequence ID" value="XM_054351866.1"/>
</dbReference>
<dbReference type="SMR" id="Q9Y485"/>
<dbReference type="BioGRID" id="108023">
    <property type="interactions" value="62"/>
</dbReference>
<dbReference type="ComplexPortal" id="CPX-10301">
    <property type="entry name" value="RAVE complex, DMXL1 variant"/>
</dbReference>
<dbReference type="CORUM" id="Q9Y485"/>
<dbReference type="FunCoup" id="Q9Y485">
    <property type="interactions" value="1301"/>
</dbReference>
<dbReference type="IntAct" id="Q9Y485">
    <property type="interactions" value="29"/>
</dbReference>
<dbReference type="STRING" id="9606.ENSP00000439479"/>
<dbReference type="TCDB" id="8.A.92.1.18">
    <property type="family name" value="the g-protein AlphaBetaGama complex (gpc) family"/>
</dbReference>
<dbReference type="CarbonylDB" id="Q9Y485"/>
<dbReference type="GlyCosmos" id="Q9Y485">
    <property type="glycosylation" value="1 site, 2 glycans"/>
</dbReference>
<dbReference type="GlyGen" id="Q9Y485">
    <property type="glycosylation" value="5 sites, 2 O-linked glycans (4 sites)"/>
</dbReference>
<dbReference type="iPTMnet" id="Q9Y485"/>
<dbReference type="PhosphoSitePlus" id="Q9Y485"/>
<dbReference type="BioMuta" id="DMXL1"/>
<dbReference type="DMDM" id="296439372"/>
<dbReference type="jPOST" id="Q9Y485"/>
<dbReference type="MassIVE" id="Q9Y485"/>
<dbReference type="PaxDb" id="9606-ENSP00000439479"/>
<dbReference type="PeptideAtlas" id="Q9Y485"/>
<dbReference type="ProteomicsDB" id="86129"/>
<dbReference type="Pumba" id="Q9Y485"/>
<dbReference type="Antibodypedia" id="49471">
    <property type="antibodies" value="21 antibodies from 12 providers"/>
</dbReference>
<dbReference type="DNASU" id="1657"/>
<dbReference type="Ensembl" id="ENST00000311085.8">
    <property type="protein sequence ID" value="ENSP00000309690.8"/>
    <property type="gene ID" value="ENSG00000172869.15"/>
</dbReference>
<dbReference type="GeneID" id="1657"/>
<dbReference type="KEGG" id="hsa:1657"/>
<dbReference type="UCSC" id="uc003ksd.3">
    <property type="organism name" value="human"/>
</dbReference>
<dbReference type="AGR" id="HGNC:2937"/>
<dbReference type="CTD" id="1657"/>
<dbReference type="DisGeNET" id="1657"/>
<dbReference type="GeneCards" id="DMXL1"/>
<dbReference type="HGNC" id="HGNC:2937">
    <property type="gene designation" value="DMXL1"/>
</dbReference>
<dbReference type="HPA" id="ENSG00000172869">
    <property type="expression patterns" value="Low tissue specificity"/>
</dbReference>
<dbReference type="MalaCards" id="DMXL1"/>
<dbReference type="MIM" id="605671">
    <property type="type" value="gene"/>
</dbReference>
<dbReference type="neXtProt" id="NX_Q9Y485"/>
<dbReference type="OpenTargets" id="ENSG00000172869"/>
<dbReference type="PharmGKB" id="PA27391"/>
<dbReference type="VEuPathDB" id="HostDB:ENSG00000172869"/>
<dbReference type="eggNOG" id="KOG1064">
    <property type="taxonomic scope" value="Eukaryota"/>
</dbReference>
<dbReference type="GeneTree" id="ENSGT00390000000096"/>
<dbReference type="HOGENOM" id="CLU_000267_0_0_1"/>
<dbReference type="InParanoid" id="Q9Y485"/>
<dbReference type="OrthoDB" id="342131at2759"/>
<dbReference type="PAN-GO" id="Q9Y485">
    <property type="GO annotations" value="2 GO annotations based on evolutionary models"/>
</dbReference>
<dbReference type="PhylomeDB" id="Q9Y485"/>
<dbReference type="TreeFam" id="TF312896"/>
<dbReference type="PathwayCommons" id="Q9Y485"/>
<dbReference type="SignaLink" id="Q9Y485"/>
<dbReference type="BioGRID-ORCS" id="1657">
    <property type="hits" value="31 hits in 1154 CRISPR screens"/>
</dbReference>
<dbReference type="ChiTaRS" id="DMXL1">
    <property type="organism name" value="human"/>
</dbReference>
<dbReference type="GenomeRNAi" id="1657"/>
<dbReference type="Pharos" id="Q9Y485">
    <property type="development level" value="Tdark"/>
</dbReference>
<dbReference type="PRO" id="PR:Q9Y485"/>
<dbReference type="Proteomes" id="UP000005640">
    <property type="component" value="Chromosome 5"/>
</dbReference>
<dbReference type="RNAct" id="Q9Y485">
    <property type="molecule type" value="protein"/>
</dbReference>
<dbReference type="Bgee" id="ENSG00000172869">
    <property type="expression patterns" value="Expressed in choroid plexus epithelium and 205 other cell types or tissues"/>
</dbReference>
<dbReference type="ExpressionAtlas" id="Q9Y485">
    <property type="expression patterns" value="baseline and differential"/>
</dbReference>
<dbReference type="GO" id="GO:0043291">
    <property type="term" value="C:RAVE complex"/>
    <property type="evidence" value="ECO:0000318"/>
    <property type="project" value="GO_Central"/>
</dbReference>
<dbReference type="GO" id="GO:0007035">
    <property type="term" value="P:vacuolar acidification"/>
    <property type="evidence" value="ECO:0000318"/>
    <property type="project" value="GO_Central"/>
</dbReference>
<dbReference type="FunFam" id="2.130.10.10:FF:000540">
    <property type="entry name" value="Dmx like 1"/>
    <property type="match status" value="1"/>
</dbReference>
<dbReference type="FunFam" id="2.130.10.10:FF:000150">
    <property type="entry name" value="Dmx-like 2, isoform CRA_c"/>
    <property type="match status" value="1"/>
</dbReference>
<dbReference type="FunFam" id="2.130.10.10:FF:000093">
    <property type="entry name" value="DmX-like protein 1"/>
    <property type="match status" value="1"/>
</dbReference>
<dbReference type="Gene3D" id="2.130.10.10">
    <property type="entry name" value="YVTN repeat-like/Quinoprotein amine dehydrogenase"/>
    <property type="match status" value="3"/>
</dbReference>
<dbReference type="InterPro" id="IPR052208">
    <property type="entry name" value="DmX-like/RAVE_component"/>
</dbReference>
<dbReference type="InterPro" id="IPR022033">
    <property type="entry name" value="Rav1p_C"/>
</dbReference>
<dbReference type="InterPro" id="IPR015943">
    <property type="entry name" value="WD40/YVTN_repeat-like_dom_sf"/>
</dbReference>
<dbReference type="InterPro" id="IPR036322">
    <property type="entry name" value="WD40_repeat_dom_sf"/>
</dbReference>
<dbReference type="InterPro" id="IPR001680">
    <property type="entry name" value="WD40_rpt"/>
</dbReference>
<dbReference type="PANTHER" id="PTHR13950:SF12">
    <property type="entry name" value="DMX-LIKE PROTEIN 1"/>
    <property type="match status" value="1"/>
</dbReference>
<dbReference type="PANTHER" id="PTHR13950">
    <property type="entry name" value="RABCONNECTIN-RELATED"/>
    <property type="match status" value="1"/>
</dbReference>
<dbReference type="Pfam" id="PF12234">
    <property type="entry name" value="Rav1p_C"/>
    <property type="match status" value="2"/>
</dbReference>
<dbReference type="Pfam" id="PF00400">
    <property type="entry name" value="WD40"/>
    <property type="match status" value="2"/>
</dbReference>
<dbReference type="SMART" id="SM00320">
    <property type="entry name" value="WD40"/>
    <property type="match status" value="10"/>
</dbReference>
<dbReference type="SUPFAM" id="SSF50978">
    <property type="entry name" value="WD40 repeat-like"/>
    <property type="match status" value="2"/>
</dbReference>
<dbReference type="PROSITE" id="PS00678">
    <property type="entry name" value="WD_REPEATS_1"/>
    <property type="match status" value="1"/>
</dbReference>
<dbReference type="PROSITE" id="PS50082">
    <property type="entry name" value="WD_REPEATS_2"/>
    <property type="match status" value="1"/>
</dbReference>
<dbReference type="PROSITE" id="PS50294">
    <property type="entry name" value="WD_REPEATS_REGION"/>
    <property type="match status" value="1"/>
</dbReference>